<proteinExistence type="inferred from homology"/>
<name>ISPE_CHLFF</name>
<evidence type="ECO:0000255" key="1">
    <source>
        <dbReference type="HAMAP-Rule" id="MF_00061"/>
    </source>
</evidence>
<organism>
    <name type="scientific">Chlamydia felis (strain Fe/C-56)</name>
    <name type="common">Chlamydophila felis</name>
    <dbReference type="NCBI Taxonomy" id="264202"/>
    <lineage>
        <taxon>Bacteria</taxon>
        <taxon>Pseudomonadati</taxon>
        <taxon>Chlamydiota</taxon>
        <taxon>Chlamydiia</taxon>
        <taxon>Chlamydiales</taxon>
        <taxon>Chlamydiaceae</taxon>
        <taxon>Chlamydia/Chlamydophila group</taxon>
        <taxon>Chlamydia</taxon>
    </lineage>
</organism>
<accession>Q255R7</accession>
<dbReference type="EC" id="2.7.1.148" evidence="1"/>
<dbReference type="EMBL" id="AP006861">
    <property type="protein sequence ID" value="BAE80971.1"/>
    <property type="molecule type" value="Genomic_DNA"/>
</dbReference>
<dbReference type="RefSeq" id="WP_011457753.1">
    <property type="nucleotide sequence ID" value="NC_007899.1"/>
</dbReference>
<dbReference type="SMR" id="Q255R7"/>
<dbReference type="STRING" id="264202.CF0199"/>
<dbReference type="KEGG" id="cfe:CF0199"/>
<dbReference type="eggNOG" id="COG1947">
    <property type="taxonomic scope" value="Bacteria"/>
</dbReference>
<dbReference type="HOGENOM" id="CLU_053057_3_0_0"/>
<dbReference type="OrthoDB" id="9809438at2"/>
<dbReference type="UniPathway" id="UPA00056">
    <property type="reaction ID" value="UER00094"/>
</dbReference>
<dbReference type="Proteomes" id="UP000001260">
    <property type="component" value="Chromosome"/>
</dbReference>
<dbReference type="GO" id="GO:0050515">
    <property type="term" value="F:4-(cytidine 5'-diphospho)-2-C-methyl-D-erythritol kinase activity"/>
    <property type="evidence" value="ECO:0007669"/>
    <property type="project" value="UniProtKB-UniRule"/>
</dbReference>
<dbReference type="GO" id="GO:0005524">
    <property type="term" value="F:ATP binding"/>
    <property type="evidence" value="ECO:0007669"/>
    <property type="project" value="UniProtKB-UniRule"/>
</dbReference>
<dbReference type="GO" id="GO:0019288">
    <property type="term" value="P:isopentenyl diphosphate biosynthetic process, methylerythritol 4-phosphate pathway"/>
    <property type="evidence" value="ECO:0007669"/>
    <property type="project" value="UniProtKB-UniRule"/>
</dbReference>
<dbReference type="GO" id="GO:0016114">
    <property type="term" value="P:terpenoid biosynthetic process"/>
    <property type="evidence" value="ECO:0007669"/>
    <property type="project" value="InterPro"/>
</dbReference>
<dbReference type="Gene3D" id="3.30.230.10">
    <property type="match status" value="1"/>
</dbReference>
<dbReference type="Gene3D" id="3.30.70.890">
    <property type="entry name" value="GHMP kinase, C-terminal domain"/>
    <property type="match status" value="1"/>
</dbReference>
<dbReference type="HAMAP" id="MF_00061">
    <property type="entry name" value="IspE"/>
    <property type="match status" value="1"/>
</dbReference>
<dbReference type="InterPro" id="IPR036554">
    <property type="entry name" value="GHMP_kinase_C_sf"/>
</dbReference>
<dbReference type="InterPro" id="IPR006204">
    <property type="entry name" value="GHMP_kinase_N_dom"/>
</dbReference>
<dbReference type="InterPro" id="IPR004424">
    <property type="entry name" value="IspE"/>
</dbReference>
<dbReference type="InterPro" id="IPR020568">
    <property type="entry name" value="Ribosomal_Su5_D2-typ_SF"/>
</dbReference>
<dbReference type="InterPro" id="IPR014721">
    <property type="entry name" value="Ribsml_uS5_D2-typ_fold_subgr"/>
</dbReference>
<dbReference type="NCBIfam" id="TIGR00154">
    <property type="entry name" value="ispE"/>
    <property type="match status" value="1"/>
</dbReference>
<dbReference type="PANTHER" id="PTHR43527">
    <property type="entry name" value="4-DIPHOSPHOCYTIDYL-2-C-METHYL-D-ERYTHRITOL KINASE, CHLOROPLASTIC"/>
    <property type="match status" value="1"/>
</dbReference>
<dbReference type="PANTHER" id="PTHR43527:SF2">
    <property type="entry name" value="4-DIPHOSPHOCYTIDYL-2-C-METHYL-D-ERYTHRITOL KINASE, CHLOROPLASTIC"/>
    <property type="match status" value="1"/>
</dbReference>
<dbReference type="Pfam" id="PF00288">
    <property type="entry name" value="GHMP_kinases_N"/>
    <property type="match status" value="1"/>
</dbReference>
<dbReference type="PIRSF" id="PIRSF010376">
    <property type="entry name" value="IspE"/>
    <property type="match status" value="1"/>
</dbReference>
<dbReference type="SUPFAM" id="SSF55060">
    <property type="entry name" value="GHMP Kinase, C-terminal domain"/>
    <property type="match status" value="1"/>
</dbReference>
<dbReference type="SUPFAM" id="SSF54211">
    <property type="entry name" value="Ribosomal protein S5 domain 2-like"/>
    <property type="match status" value="1"/>
</dbReference>
<feature type="chain" id="PRO_1000007830" description="4-diphosphocytidyl-2-C-methyl-D-erythritol kinase">
    <location>
        <begin position="1"/>
        <end position="290"/>
    </location>
</feature>
<feature type="active site" evidence="1">
    <location>
        <position position="8"/>
    </location>
</feature>
<feature type="active site" evidence="1">
    <location>
        <position position="131"/>
    </location>
</feature>
<feature type="binding site" evidence="1">
    <location>
        <begin position="89"/>
        <end position="99"/>
    </location>
    <ligand>
        <name>ATP</name>
        <dbReference type="ChEBI" id="CHEBI:30616"/>
    </ligand>
</feature>
<gene>
    <name evidence="1" type="primary">ispE</name>
    <name type="ordered locus">CF0199</name>
</gene>
<comment type="function">
    <text evidence="1">Catalyzes the phosphorylation of the position 2 hydroxy group of 4-diphosphocytidyl-2C-methyl-D-erythritol.</text>
</comment>
<comment type="catalytic activity">
    <reaction evidence="1">
        <text>4-CDP-2-C-methyl-D-erythritol + ATP = 4-CDP-2-C-methyl-D-erythritol 2-phosphate + ADP + H(+)</text>
        <dbReference type="Rhea" id="RHEA:18437"/>
        <dbReference type="ChEBI" id="CHEBI:15378"/>
        <dbReference type="ChEBI" id="CHEBI:30616"/>
        <dbReference type="ChEBI" id="CHEBI:57823"/>
        <dbReference type="ChEBI" id="CHEBI:57919"/>
        <dbReference type="ChEBI" id="CHEBI:456216"/>
        <dbReference type="EC" id="2.7.1.148"/>
    </reaction>
</comment>
<comment type="pathway">
    <text evidence="1">Isoprenoid biosynthesis; isopentenyl diphosphate biosynthesis via DXP pathway; isopentenyl diphosphate from 1-deoxy-D-xylulose 5-phosphate: step 3/6.</text>
</comment>
<comment type="similarity">
    <text evidence="1">Belongs to the GHMP kinase family. IspE subfamily.</text>
</comment>
<sequence length="290" mass="32892">MDLFSPAKLNLFLKLHGKTSHGFHEMTTQYQVIDFGDNLYLESSNEDSLVCNLPELNTPQNLIWKSLQVFRDYTQIRSPVAWRLHKRIPIGAGVGGGSSNAATALYALNEHFQTQLPNSVLQELGKKIGMDVPLFFSSGSAIGVGCGEKILPYKDCKREERFVLYFSDQGVLTKDAFSYVRSEDFSQREENISLYKKENDLEKSVFRFRRDLEEKKQMLKKMWSPFHAHVCMSGAGATLFVSYPRKLEIDPSIAKAIHATIQNSQGVLVNSLRKHSGWFPCPDNLFATTR</sequence>
<keyword id="KW-0067">ATP-binding</keyword>
<keyword id="KW-0414">Isoprene biosynthesis</keyword>
<keyword id="KW-0418">Kinase</keyword>
<keyword id="KW-0547">Nucleotide-binding</keyword>
<keyword id="KW-0808">Transferase</keyword>
<reference key="1">
    <citation type="journal article" date="2006" name="DNA Res.">
        <title>Genome sequence of the cat pathogen, Chlamydophila felis.</title>
        <authorList>
            <person name="Azuma Y."/>
            <person name="Hirakawa H."/>
            <person name="Yamashita A."/>
            <person name="Cai Y."/>
            <person name="Rahman M.A."/>
            <person name="Suzuki H."/>
            <person name="Mitaku S."/>
            <person name="Toh H."/>
            <person name="Goto S."/>
            <person name="Murakami T."/>
            <person name="Sugi K."/>
            <person name="Hayashi H."/>
            <person name="Fukushi H."/>
            <person name="Hattori M."/>
            <person name="Kuhara S."/>
            <person name="Shirai M."/>
        </authorList>
    </citation>
    <scope>NUCLEOTIDE SEQUENCE [LARGE SCALE GENOMIC DNA]</scope>
    <source>
        <strain>Fe/C-56</strain>
    </source>
</reference>
<protein>
    <recommendedName>
        <fullName evidence="1">4-diphosphocytidyl-2-C-methyl-D-erythritol kinase</fullName>
        <shortName evidence="1">CMK</shortName>
        <ecNumber evidence="1">2.7.1.148</ecNumber>
    </recommendedName>
    <alternativeName>
        <fullName evidence="1">4-(cytidine-5'-diphospho)-2-C-methyl-D-erythritol kinase</fullName>
    </alternativeName>
</protein>